<organism>
    <name type="scientific">Halalkalibacterium halodurans (strain ATCC BAA-125 / DSM 18197 / FERM 7344 / JCM 9153 / C-125)</name>
    <name type="common">Bacillus halodurans</name>
    <dbReference type="NCBI Taxonomy" id="272558"/>
    <lineage>
        <taxon>Bacteria</taxon>
        <taxon>Bacillati</taxon>
        <taxon>Bacillota</taxon>
        <taxon>Bacilli</taxon>
        <taxon>Bacillales</taxon>
        <taxon>Bacillaceae</taxon>
        <taxon>Halalkalibacterium (ex Joshi et al. 2022)</taxon>
    </lineage>
</organism>
<sequence>MNSEFMDALTTLEKEKGISKEVIIEAIEAALISGYKRNFNQAQNVRVDVNRENGSIRVFARKEVVEEVFDARLEISLDEAKGINPNYEVDDVVEIEVTPKDFGRIAAQTAKQVVTQRVREAERGIIYADFIDREEDIMTGIVQRQDNRFIYVDLGKVEALLPLSEQMPNESYRHNDRIKAYITKVEKTTKGPQIMISRTHPGLLKRLFELEVPEIYDGTVELKSVAREAGDRSKISVHAENPEVDPVGACVGPKGSRVQTIVNELKGEKIDIVRWSEDPVEYVANALSPSKVVKVNVNEEEKTTQVIVPDYQLSLAIGKRGQNARLAAKLTGWKIDIKSESEAQELGLLEDEAASHETLALDQETADQPEATVETSKNHEEE</sequence>
<keyword id="KW-0963">Cytoplasm</keyword>
<keyword id="KW-1185">Reference proteome</keyword>
<keyword id="KW-0694">RNA-binding</keyword>
<keyword id="KW-0804">Transcription</keyword>
<keyword id="KW-0889">Transcription antitermination</keyword>
<keyword id="KW-0805">Transcription regulation</keyword>
<keyword id="KW-0806">Transcription termination</keyword>
<proteinExistence type="inferred from homology"/>
<accession>Q9KA74</accession>
<feature type="chain" id="PRO_0000181959" description="Transcription termination/antitermination protein NusA">
    <location>
        <begin position="1"/>
        <end position="382"/>
    </location>
</feature>
<feature type="domain" description="S1 motif" evidence="1">
    <location>
        <begin position="135"/>
        <end position="199"/>
    </location>
</feature>
<feature type="domain" description="KH" evidence="1">
    <location>
        <begin position="301"/>
        <end position="367"/>
    </location>
</feature>
<feature type="region of interest" description="Disordered" evidence="2">
    <location>
        <begin position="348"/>
        <end position="382"/>
    </location>
</feature>
<dbReference type="EMBL" id="BA000004">
    <property type="protein sequence ID" value="BAB06135.1"/>
    <property type="molecule type" value="Genomic_DNA"/>
</dbReference>
<dbReference type="PIR" id="H83951">
    <property type="entry name" value="H83951"/>
</dbReference>
<dbReference type="RefSeq" id="WP_010898569.1">
    <property type="nucleotide sequence ID" value="NC_002570.2"/>
</dbReference>
<dbReference type="SMR" id="Q9KA74"/>
<dbReference type="STRING" id="272558.gene:10728314"/>
<dbReference type="KEGG" id="bha:BH2416"/>
<dbReference type="eggNOG" id="COG0195">
    <property type="taxonomic scope" value="Bacteria"/>
</dbReference>
<dbReference type="HOGENOM" id="CLU_029242_2_2_9"/>
<dbReference type="OrthoDB" id="9807233at2"/>
<dbReference type="Proteomes" id="UP000001258">
    <property type="component" value="Chromosome"/>
</dbReference>
<dbReference type="GO" id="GO:0005829">
    <property type="term" value="C:cytosol"/>
    <property type="evidence" value="ECO:0007669"/>
    <property type="project" value="TreeGrafter"/>
</dbReference>
<dbReference type="GO" id="GO:0003700">
    <property type="term" value="F:DNA-binding transcription factor activity"/>
    <property type="evidence" value="ECO:0007669"/>
    <property type="project" value="InterPro"/>
</dbReference>
<dbReference type="GO" id="GO:0003723">
    <property type="term" value="F:RNA binding"/>
    <property type="evidence" value="ECO:0007669"/>
    <property type="project" value="UniProtKB-UniRule"/>
</dbReference>
<dbReference type="GO" id="GO:0006353">
    <property type="term" value="P:DNA-templated transcription termination"/>
    <property type="evidence" value="ECO:0007669"/>
    <property type="project" value="UniProtKB-UniRule"/>
</dbReference>
<dbReference type="GO" id="GO:0031564">
    <property type="term" value="P:transcription antitermination"/>
    <property type="evidence" value="ECO:0007669"/>
    <property type="project" value="UniProtKB-UniRule"/>
</dbReference>
<dbReference type="CDD" id="cd02134">
    <property type="entry name" value="KH-II_NusA_rpt1"/>
    <property type="match status" value="1"/>
</dbReference>
<dbReference type="CDD" id="cd22529">
    <property type="entry name" value="KH-II_NusA_rpt2"/>
    <property type="match status" value="1"/>
</dbReference>
<dbReference type="CDD" id="cd04455">
    <property type="entry name" value="S1_NusA"/>
    <property type="match status" value="1"/>
</dbReference>
<dbReference type="FunFam" id="2.40.50.140:FF:000058">
    <property type="entry name" value="Transcription termination/antitermination protein NusA"/>
    <property type="match status" value="1"/>
</dbReference>
<dbReference type="FunFam" id="3.30.1480.10:FF:000002">
    <property type="entry name" value="Transcription termination/antitermination protein NusA"/>
    <property type="match status" value="1"/>
</dbReference>
<dbReference type="FunFam" id="3.30.300.20:FF:000002">
    <property type="entry name" value="Transcription termination/antitermination protein NusA"/>
    <property type="match status" value="1"/>
</dbReference>
<dbReference type="FunFam" id="3.30.300.20:FF:000005">
    <property type="entry name" value="Transcription termination/antitermination protein NusA"/>
    <property type="match status" value="1"/>
</dbReference>
<dbReference type="Gene3D" id="3.30.300.20">
    <property type="match status" value="2"/>
</dbReference>
<dbReference type="Gene3D" id="2.40.50.140">
    <property type="entry name" value="Nucleic acid-binding proteins"/>
    <property type="match status" value="1"/>
</dbReference>
<dbReference type="Gene3D" id="3.30.1480.10">
    <property type="entry name" value="NusA, N-terminal domain"/>
    <property type="match status" value="1"/>
</dbReference>
<dbReference type="HAMAP" id="MF_00945_B">
    <property type="entry name" value="NusA_B"/>
    <property type="match status" value="1"/>
</dbReference>
<dbReference type="InterPro" id="IPR004087">
    <property type="entry name" value="KH_dom"/>
</dbReference>
<dbReference type="InterPro" id="IPR015946">
    <property type="entry name" value="KH_dom-like_a/b"/>
</dbReference>
<dbReference type="InterPro" id="IPR025249">
    <property type="entry name" value="KH_dom_NusA-like"/>
</dbReference>
<dbReference type="InterPro" id="IPR009019">
    <property type="entry name" value="KH_sf_prok-type"/>
</dbReference>
<dbReference type="InterPro" id="IPR012340">
    <property type="entry name" value="NA-bd_OB-fold"/>
</dbReference>
<dbReference type="InterPro" id="IPR030842">
    <property type="entry name" value="NusA_bac"/>
</dbReference>
<dbReference type="InterPro" id="IPR036555">
    <property type="entry name" value="NusA_N_sf"/>
</dbReference>
<dbReference type="InterPro" id="IPR003029">
    <property type="entry name" value="S1_domain"/>
</dbReference>
<dbReference type="InterPro" id="IPR013735">
    <property type="entry name" value="TF_NusA_N"/>
</dbReference>
<dbReference type="InterPro" id="IPR010213">
    <property type="entry name" value="Tscrpt_termination_fac_NusA"/>
</dbReference>
<dbReference type="NCBIfam" id="TIGR01953">
    <property type="entry name" value="NusA"/>
    <property type="match status" value="1"/>
</dbReference>
<dbReference type="PANTHER" id="PTHR22648">
    <property type="entry name" value="TRANSCRIPTION TERMINATION FACTOR NUSA"/>
    <property type="match status" value="1"/>
</dbReference>
<dbReference type="PANTHER" id="PTHR22648:SF0">
    <property type="entry name" value="TRANSCRIPTION TERMINATION_ANTITERMINATION PROTEIN NUSA"/>
    <property type="match status" value="1"/>
</dbReference>
<dbReference type="Pfam" id="PF13184">
    <property type="entry name" value="KH_5"/>
    <property type="match status" value="1"/>
</dbReference>
<dbReference type="Pfam" id="PF08529">
    <property type="entry name" value="NusA_N"/>
    <property type="match status" value="1"/>
</dbReference>
<dbReference type="Pfam" id="PF00575">
    <property type="entry name" value="S1"/>
    <property type="match status" value="1"/>
</dbReference>
<dbReference type="SMART" id="SM00322">
    <property type="entry name" value="KH"/>
    <property type="match status" value="2"/>
</dbReference>
<dbReference type="SMART" id="SM00316">
    <property type="entry name" value="S1"/>
    <property type="match status" value="1"/>
</dbReference>
<dbReference type="SUPFAM" id="SSF50249">
    <property type="entry name" value="Nucleic acid-binding proteins"/>
    <property type="match status" value="1"/>
</dbReference>
<dbReference type="SUPFAM" id="SSF54814">
    <property type="entry name" value="Prokaryotic type KH domain (KH-domain type II)"/>
    <property type="match status" value="2"/>
</dbReference>
<dbReference type="SUPFAM" id="SSF69705">
    <property type="entry name" value="Transcription factor NusA, N-terminal domain"/>
    <property type="match status" value="1"/>
</dbReference>
<dbReference type="PROSITE" id="PS50084">
    <property type="entry name" value="KH_TYPE_1"/>
    <property type="match status" value="1"/>
</dbReference>
<dbReference type="PROSITE" id="PS50126">
    <property type="entry name" value="S1"/>
    <property type="match status" value="1"/>
</dbReference>
<protein>
    <recommendedName>
        <fullName evidence="1">Transcription termination/antitermination protein NusA</fullName>
    </recommendedName>
</protein>
<evidence type="ECO:0000255" key="1">
    <source>
        <dbReference type="HAMAP-Rule" id="MF_00945"/>
    </source>
</evidence>
<evidence type="ECO:0000256" key="2">
    <source>
        <dbReference type="SAM" id="MobiDB-lite"/>
    </source>
</evidence>
<comment type="function">
    <text evidence="1">Participates in both transcription termination and antitermination.</text>
</comment>
<comment type="subunit">
    <text evidence="1">Monomer. Binds directly to the core enzyme of the DNA-dependent RNA polymerase and to nascent RNA.</text>
</comment>
<comment type="subcellular location">
    <subcellularLocation>
        <location evidence="1">Cytoplasm</location>
    </subcellularLocation>
</comment>
<comment type="similarity">
    <text evidence="1">Belongs to the NusA family.</text>
</comment>
<reference key="1">
    <citation type="journal article" date="2000" name="Nucleic Acids Res.">
        <title>Complete genome sequence of the alkaliphilic bacterium Bacillus halodurans and genomic sequence comparison with Bacillus subtilis.</title>
        <authorList>
            <person name="Takami H."/>
            <person name="Nakasone K."/>
            <person name="Takaki Y."/>
            <person name="Maeno G."/>
            <person name="Sasaki R."/>
            <person name="Masui N."/>
            <person name="Fuji F."/>
            <person name="Hirama C."/>
            <person name="Nakamura Y."/>
            <person name="Ogasawara N."/>
            <person name="Kuhara S."/>
            <person name="Horikoshi K."/>
        </authorList>
    </citation>
    <scope>NUCLEOTIDE SEQUENCE [LARGE SCALE GENOMIC DNA]</scope>
    <source>
        <strain>ATCC BAA-125 / DSM 18197 / FERM 7344 / JCM 9153 / C-125</strain>
    </source>
</reference>
<name>NUSA_HALH5</name>
<gene>
    <name evidence="1" type="primary">nusA</name>
    <name type="ordered locus">BH2416</name>
</gene>